<accession>P0DH85</accession>
<accession>Q9SHV3</accession>
<protein>
    <recommendedName>
        <fullName>B3 domain-containing protein REM10</fullName>
    </recommendedName>
    <alternativeName>
        <fullName>Protein REPRODUCTIVE MERISTEM 10</fullName>
    </alternativeName>
</protein>
<keyword id="KW-0238">DNA-binding</keyword>
<keyword id="KW-0539">Nucleus</keyword>
<keyword id="KW-1185">Reference proteome</keyword>
<keyword id="KW-0677">Repeat</keyword>
<keyword id="KW-0804">Transcription</keyword>
<keyword id="KW-0805">Transcription regulation</keyword>
<evidence type="ECO:0000255" key="1">
    <source>
        <dbReference type="PROSITE-ProRule" id="PRU00326"/>
    </source>
</evidence>
<evidence type="ECO:0000305" key="2"/>
<dbReference type="EMBL" id="AC007266">
    <property type="protein sequence ID" value="AAD26893.1"/>
    <property type="status" value="ALT_SEQ"/>
    <property type="molecule type" value="Genomic_DNA"/>
</dbReference>
<dbReference type="EMBL" id="CP002685">
    <property type="protein sequence ID" value="AEC07620.1"/>
    <property type="molecule type" value="Genomic_DNA"/>
</dbReference>
<dbReference type="EMBL" id="BX819051">
    <property type="status" value="NOT_ANNOTATED_CDS"/>
    <property type="molecule type" value="mRNA"/>
</dbReference>
<dbReference type="PIR" id="H84639">
    <property type="entry name" value="H84639"/>
</dbReference>
<dbReference type="RefSeq" id="NP_180046.2">
    <property type="nucleotide sequence ID" value="NM_128031.4"/>
</dbReference>
<dbReference type="SMR" id="P0DH85"/>
<dbReference type="BioGRID" id="2358">
    <property type="interactions" value="6"/>
</dbReference>
<dbReference type="FunCoup" id="P0DH85">
    <property type="interactions" value="6"/>
</dbReference>
<dbReference type="IntAct" id="P0DH85">
    <property type="interactions" value="6"/>
</dbReference>
<dbReference type="STRING" id="3702.P0DH85"/>
<dbReference type="iPTMnet" id="P0DH85"/>
<dbReference type="PaxDb" id="3702-AT2G24700.1"/>
<dbReference type="EnsemblPlants" id="AT2G24700.1">
    <property type="protein sequence ID" value="AT2G24700.1"/>
    <property type="gene ID" value="AT2G24700"/>
</dbReference>
<dbReference type="GeneID" id="817006"/>
<dbReference type="Gramene" id="AT2G24700.1">
    <property type="protein sequence ID" value="AT2G24700.1"/>
    <property type="gene ID" value="AT2G24700"/>
</dbReference>
<dbReference type="KEGG" id="ath:AT2G24700"/>
<dbReference type="Araport" id="AT2G24700"/>
<dbReference type="TAIR" id="AT2G24700"/>
<dbReference type="eggNOG" id="ENOG502SK57">
    <property type="taxonomic scope" value="Eukaryota"/>
</dbReference>
<dbReference type="HOGENOM" id="CLU_014437_2_1_1"/>
<dbReference type="InParanoid" id="P0DH85"/>
<dbReference type="OMA" id="NMHKLEP"/>
<dbReference type="PhylomeDB" id="P0DH85"/>
<dbReference type="PRO" id="PR:P0DH85"/>
<dbReference type="Proteomes" id="UP000006548">
    <property type="component" value="Chromosome 2"/>
</dbReference>
<dbReference type="ExpressionAtlas" id="P0DH85">
    <property type="expression patterns" value="baseline and differential"/>
</dbReference>
<dbReference type="GO" id="GO:0005634">
    <property type="term" value="C:nucleus"/>
    <property type="evidence" value="ECO:0007669"/>
    <property type="project" value="UniProtKB-SubCell"/>
</dbReference>
<dbReference type="GO" id="GO:0003677">
    <property type="term" value="F:DNA binding"/>
    <property type="evidence" value="ECO:0007669"/>
    <property type="project" value="UniProtKB-KW"/>
</dbReference>
<dbReference type="CDD" id="cd10017">
    <property type="entry name" value="B3_DNA"/>
    <property type="match status" value="4"/>
</dbReference>
<dbReference type="FunFam" id="2.40.330.10:FF:000009">
    <property type="entry name" value="Transcriptional factor B3 family protein"/>
    <property type="match status" value="1"/>
</dbReference>
<dbReference type="Gene3D" id="2.40.330.10">
    <property type="entry name" value="DNA-binding pseudobarrel domain"/>
    <property type="match status" value="4"/>
</dbReference>
<dbReference type="InterPro" id="IPR003340">
    <property type="entry name" value="B3_DNA-bd"/>
</dbReference>
<dbReference type="InterPro" id="IPR015300">
    <property type="entry name" value="DNA-bd_pseudobarrel_sf"/>
</dbReference>
<dbReference type="InterPro" id="IPR039218">
    <property type="entry name" value="REM_fam"/>
</dbReference>
<dbReference type="PANTHER" id="PTHR31674">
    <property type="entry name" value="B3 DOMAIN-CONTAINING PROTEIN REM-LIKE 3-RELATED"/>
    <property type="match status" value="1"/>
</dbReference>
<dbReference type="PANTHER" id="PTHR31674:SF75">
    <property type="entry name" value="TF-B3 DOMAIN-CONTAINING PROTEIN"/>
    <property type="match status" value="1"/>
</dbReference>
<dbReference type="Pfam" id="PF02362">
    <property type="entry name" value="B3"/>
    <property type="match status" value="4"/>
</dbReference>
<dbReference type="SMART" id="SM01019">
    <property type="entry name" value="B3"/>
    <property type="match status" value="4"/>
</dbReference>
<dbReference type="SUPFAM" id="SSF101936">
    <property type="entry name" value="DNA-binding pseudobarrel domain"/>
    <property type="match status" value="4"/>
</dbReference>
<dbReference type="PROSITE" id="PS50863">
    <property type="entry name" value="B3"/>
    <property type="match status" value="4"/>
</dbReference>
<sequence length="555" mass="63258">MANPLLYSPINPQFFQPLLPGFTNHLDIPVAFFLKYLVGTNVGKTAELRSDASEMTWKVKIDGRRLSNGWEDFTIAHDLRVGDIVVFRQEGELVFHVTALGPSCCEIQYGEDTLEEDKIEKLCGTENVSSKKKSLKREAESAPDNSLDSCFVATVTGSNLKRDTLYIPKEFALSNGLMNKYQIVLMNEEGESWKIDLRREAYNYGRFYMRRGWRSFCIANGKKPGDVFAFKLVKNEETPMIQLFPMTIEDLDKLQSLPRHKIRKTEAAPSSPDLSSFVATVTASNLSRDRLYLPKTFIMSNGLLKKFQMCLMNEEGESWTIDVKHEAHTGRFLTIRGWRRFCVANGKKPGDLLKFKLVHNEETPVLQLLPLNSEDLHKLNPSNDTRHGQSLKVTKKEFLGMEATENEFLGEEVYCNDSFKASEKDTLPFAEPINEDIRQGQCSQTIKQEYVSTEEKNSTSQNRFVTLTLTHSSKLNLPFEFMKRNGIKKAGKITMVDRYDAKWRTSLLMDKIGTMSLGRGSKGFCEVNGVEMNESFILELIWEDTVPLLKFCSKV</sequence>
<organism>
    <name type="scientific">Arabidopsis thaliana</name>
    <name type="common">Mouse-ear cress</name>
    <dbReference type="NCBI Taxonomy" id="3702"/>
    <lineage>
        <taxon>Eukaryota</taxon>
        <taxon>Viridiplantae</taxon>
        <taxon>Streptophyta</taxon>
        <taxon>Embryophyta</taxon>
        <taxon>Tracheophyta</taxon>
        <taxon>Spermatophyta</taxon>
        <taxon>Magnoliopsida</taxon>
        <taxon>eudicotyledons</taxon>
        <taxon>Gunneridae</taxon>
        <taxon>Pentapetalae</taxon>
        <taxon>rosids</taxon>
        <taxon>malvids</taxon>
        <taxon>Brassicales</taxon>
        <taxon>Brassicaceae</taxon>
        <taxon>Camelineae</taxon>
        <taxon>Arabidopsis</taxon>
    </lineage>
</organism>
<gene>
    <name type="primary">REM10</name>
    <name type="ordered locus">At2g24700</name>
    <name type="ORF">F27A10.1</name>
</gene>
<comment type="interaction">
    <interactant intactId="EBI-15206518">
        <id>P0DH85</id>
    </interactant>
    <interactant intactId="EBI-2309076">
        <id>Q84R27</id>
        <label>At3g18960</label>
    </interactant>
    <organismsDiffer>false</organismsDiffer>
    <experiments>3</experiments>
</comment>
<comment type="subcellular location">
    <subcellularLocation>
        <location evidence="1">Nucleus</location>
    </subcellularLocation>
</comment>
<comment type="sequence caution" evidence="2">
    <conflict type="erroneous gene model prediction">
        <sequence resource="EMBL-CDS" id="AAD26893"/>
    </conflict>
    <text>The predicted gene At2g24700 has been split into 2 genes: At2g24696 and At2g24700.</text>
</comment>
<comment type="sequence caution" evidence="2">
    <conflict type="miscellaneous discrepancy">
        <sequence resource="EMBL" id="BX819051"/>
    </conflict>
    <text>Sequencing errors.</text>
</comment>
<reference key="1">
    <citation type="journal article" date="1999" name="Nature">
        <title>Sequence and analysis of chromosome 2 of the plant Arabidopsis thaliana.</title>
        <authorList>
            <person name="Lin X."/>
            <person name="Kaul S."/>
            <person name="Rounsley S.D."/>
            <person name="Shea T.P."/>
            <person name="Benito M.-I."/>
            <person name="Town C.D."/>
            <person name="Fujii C.Y."/>
            <person name="Mason T.M."/>
            <person name="Bowman C.L."/>
            <person name="Barnstead M.E."/>
            <person name="Feldblyum T.V."/>
            <person name="Buell C.R."/>
            <person name="Ketchum K.A."/>
            <person name="Lee J.J."/>
            <person name="Ronning C.M."/>
            <person name="Koo H.L."/>
            <person name="Moffat K.S."/>
            <person name="Cronin L.A."/>
            <person name="Shen M."/>
            <person name="Pai G."/>
            <person name="Van Aken S."/>
            <person name="Umayam L."/>
            <person name="Tallon L.J."/>
            <person name="Gill J.E."/>
            <person name="Adams M.D."/>
            <person name="Carrera A.J."/>
            <person name="Creasy T.H."/>
            <person name="Goodman H.M."/>
            <person name="Somerville C.R."/>
            <person name="Copenhaver G.P."/>
            <person name="Preuss D."/>
            <person name="Nierman W.C."/>
            <person name="White O."/>
            <person name="Eisen J.A."/>
            <person name="Salzberg S.L."/>
            <person name="Fraser C.M."/>
            <person name="Venter J.C."/>
        </authorList>
    </citation>
    <scope>NUCLEOTIDE SEQUENCE [LARGE SCALE GENOMIC DNA]</scope>
    <source>
        <strain>cv. Columbia</strain>
    </source>
</reference>
<reference key="2">
    <citation type="journal article" date="2017" name="Plant J.">
        <title>Araport11: a complete reannotation of the Arabidopsis thaliana reference genome.</title>
        <authorList>
            <person name="Cheng C.Y."/>
            <person name="Krishnakumar V."/>
            <person name="Chan A.P."/>
            <person name="Thibaud-Nissen F."/>
            <person name="Schobel S."/>
            <person name="Town C.D."/>
        </authorList>
    </citation>
    <scope>GENOME REANNOTATION</scope>
    <source>
        <strain>cv. Columbia</strain>
    </source>
</reference>
<reference key="3">
    <citation type="journal article" date="2004" name="Genome Res.">
        <title>Whole genome sequence comparisons and 'full-length' cDNA sequences: a combined approach to evaluate and improve Arabidopsis genome annotation.</title>
        <authorList>
            <person name="Castelli V."/>
            <person name="Aury J.-M."/>
            <person name="Jaillon O."/>
            <person name="Wincker P."/>
            <person name="Clepet C."/>
            <person name="Menard M."/>
            <person name="Cruaud C."/>
            <person name="Quetier F."/>
            <person name="Scarpelli C."/>
            <person name="Schaechter V."/>
            <person name="Temple G."/>
            <person name="Caboche M."/>
            <person name="Weissenbach J."/>
            <person name="Salanoubat M."/>
        </authorList>
    </citation>
    <scope>NUCLEOTIDE SEQUENCE [LARGE SCALE MRNA]</scope>
    <source>
        <strain>cv. Columbia</strain>
    </source>
</reference>
<reference key="4">
    <citation type="journal article" date="2008" name="Trends Plant Sci.">
        <title>The plant B3 superfamily.</title>
        <authorList>
            <person name="Swaminathan K."/>
            <person name="Peterson K."/>
            <person name="Jack T."/>
        </authorList>
    </citation>
    <scope>GENE FAMILY</scope>
</reference>
<name>REM10_ARATH</name>
<feature type="chain" id="PRO_0000375104" description="B3 domain-containing protein REM10">
    <location>
        <begin position="1"/>
        <end position="555"/>
    </location>
</feature>
<feature type="DNA-binding region" description="TF-B3 1" evidence="1">
    <location>
        <begin position="11"/>
        <end position="103"/>
    </location>
</feature>
<feature type="DNA-binding region" description="TF-B3 2" evidence="1">
    <location>
        <begin position="150"/>
        <end position="247"/>
    </location>
</feature>
<feature type="DNA-binding region" description="TF-B3 3" evidence="1">
    <location>
        <begin position="276"/>
        <end position="372"/>
    </location>
</feature>
<feature type="DNA-binding region" description="TF-B3 4" evidence="1">
    <location>
        <begin position="460"/>
        <end position="554"/>
    </location>
</feature>
<proteinExistence type="evidence at protein level"/>